<reference key="1">
    <citation type="journal article" date="1988" name="J. Biol. Chem.">
        <title>Structure and expression of the human metallothionein-IG gene. Differential promoter activity of two linked metallothionein-I genes in response to heavy metals.</title>
        <authorList>
            <person name="Foster R."/>
            <person name="Jahroudi N."/>
            <person name="Varshney U."/>
            <person name="Gedamu L."/>
        </authorList>
    </citation>
    <scope>NUCLEOTIDE SEQUENCE [GENOMIC DNA]</scope>
</reference>
<reference key="2">
    <citation type="journal article" date="1987" name="Experientia Suppl.">
        <title>Structure and expression of the human metallothionein genes.</title>
        <authorList>
            <person name="Gedamu L."/>
            <person name="Varshney U."/>
            <person name="Jahroudi N."/>
            <person name="Foster R."/>
            <person name="Shworak N.W."/>
        </authorList>
    </citation>
    <scope>NUCLEOTIDE SEQUENCE [GENOMIC DNA]</scope>
</reference>
<reference key="3">
    <citation type="submission" date="1993-11" db="UniProtKB">
        <authorList>
            <person name="Hunziker P.E."/>
        </authorList>
    </citation>
    <scope>PROTEIN SEQUENCE (ISOFORM 1)</scope>
    <source>
        <tissue>Liver</tissue>
    </source>
</reference>
<reference key="4">
    <citation type="journal article" date="2004" name="Genome Res.">
        <title>The status, quality, and expansion of the NIH full-length cDNA project: the Mammalian Gene Collection (MGC).</title>
        <authorList>
            <consortium name="The MGC Project Team"/>
        </authorList>
    </citation>
    <scope>NUCLEOTIDE SEQUENCE [LARGE SCALE MRNA] (ISOFORM 1)</scope>
    <source>
        <tissue>Liver</tissue>
    </source>
</reference>
<reference key="5">
    <citation type="journal article" date="1994" name="Eur. J. Biochem.">
        <title>Induction by zinc of specific metallothionein isoforms in human monocytes.</title>
        <authorList>
            <person name="Pauwels M."/>
            <person name="van Weyenbergh J."/>
            <person name="Soumillion A."/>
            <person name="Proost P."/>
            <person name="Ley M."/>
        </authorList>
    </citation>
    <scope>NUCLEOTIDE SEQUENCE [MRNA] OF 1-31 (ISOFORM 2)</scope>
    <scope>ACETYLATION AT MET-1</scope>
</reference>
<dbReference type="EMBL" id="J03910">
    <property type="protein sequence ID" value="AAA59873.1"/>
    <property type="molecule type" value="Genomic_DNA"/>
</dbReference>
<dbReference type="EMBL" id="BC020757">
    <property type="protein sequence ID" value="AAH20757.1"/>
    <property type="molecule type" value="mRNA"/>
</dbReference>
<dbReference type="EMBL" id="S68954">
    <property type="protein sequence ID" value="AAB30083.1"/>
    <property type="molecule type" value="mRNA"/>
</dbReference>
<dbReference type="CCDS" id="CCDS10766.1">
    <molecule id="P13640-2"/>
</dbReference>
<dbReference type="CCDS" id="CCDS76873.1">
    <molecule id="P13640-1"/>
</dbReference>
<dbReference type="PIR" id="A29236">
    <property type="entry name" value="SMHU1G"/>
</dbReference>
<dbReference type="RefSeq" id="NP_001288196.1">
    <molecule id="P13640-1"/>
    <property type="nucleotide sequence ID" value="NM_001301267.2"/>
</dbReference>
<dbReference type="RefSeq" id="NP_005941.1">
    <molecule id="P13640-2"/>
    <property type="nucleotide sequence ID" value="NM_005950.3"/>
</dbReference>
<dbReference type="SMR" id="P13640"/>
<dbReference type="BioGRID" id="110601">
    <property type="interactions" value="8"/>
</dbReference>
<dbReference type="FunCoup" id="P13640">
    <property type="interactions" value="789"/>
</dbReference>
<dbReference type="IntAct" id="P13640">
    <property type="interactions" value="3"/>
</dbReference>
<dbReference type="STRING" id="9606.ENSP00000369139"/>
<dbReference type="DrugBank" id="DB09130">
    <property type="generic name" value="Copper"/>
</dbReference>
<dbReference type="DrugBank" id="DB12965">
    <property type="generic name" value="Silver"/>
</dbReference>
<dbReference type="GlyGen" id="P13640">
    <property type="glycosylation" value="1 site, 10 N-linked glycans (1 site)"/>
</dbReference>
<dbReference type="iPTMnet" id="P13640"/>
<dbReference type="PhosphoSitePlus" id="P13640"/>
<dbReference type="BioMuta" id="MT1G"/>
<dbReference type="DMDM" id="90109444"/>
<dbReference type="jPOST" id="P13640"/>
<dbReference type="MassIVE" id="P13640"/>
<dbReference type="PeptideAtlas" id="P13640"/>
<dbReference type="ProteomicsDB" id="52948">
    <molecule id="P13640-1"/>
</dbReference>
<dbReference type="ProteomicsDB" id="52949">
    <molecule id="P13640-2"/>
</dbReference>
<dbReference type="TopDownProteomics" id="P13640-2">
    <molecule id="P13640-2"/>
</dbReference>
<dbReference type="Antibodypedia" id="71774">
    <property type="antibodies" value="36 antibodies from 8 providers"/>
</dbReference>
<dbReference type="DNASU" id="4495"/>
<dbReference type="Ensembl" id="ENST00000379811.4">
    <molecule id="P13640-1"/>
    <property type="protein sequence ID" value="ENSP00000369139.4"/>
    <property type="gene ID" value="ENSG00000125144.14"/>
</dbReference>
<dbReference type="Ensembl" id="ENST00000444837.6">
    <molecule id="P13640-2"/>
    <property type="protein sequence ID" value="ENSP00000391397.2"/>
    <property type="gene ID" value="ENSG00000125144.14"/>
</dbReference>
<dbReference type="GeneID" id="4495"/>
<dbReference type="KEGG" id="hsa:4495"/>
<dbReference type="MANE-Select" id="ENST00000379811.4">
    <property type="protein sequence ID" value="ENSP00000369139.4"/>
    <property type="RefSeq nucleotide sequence ID" value="NM_001301267.2"/>
    <property type="RefSeq protein sequence ID" value="NP_001288196.1"/>
</dbReference>
<dbReference type="UCSC" id="uc002eju.2">
    <molecule id="P13640-1"/>
    <property type="organism name" value="human"/>
</dbReference>
<dbReference type="AGR" id="HGNC:7399"/>
<dbReference type="CTD" id="4495"/>
<dbReference type="DisGeNET" id="4495"/>
<dbReference type="GeneCards" id="MT1G"/>
<dbReference type="HGNC" id="HGNC:7399">
    <property type="gene designation" value="MT1G"/>
</dbReference>
<dbReference type="HPA" id="ENSG00000125144">
    <property type="expression patterns" value="Tissue enhanced (kidney, liver, thyroid gland)"/>
</dbReference>
<dbReference type="MIM" id="156353">
    <property type="type" value="gene"/>
</dbReference>
<dbReference type="neXtProt" id="NX_P13640"/>
<dbReference type="OpenTargets" id="ENSG00000125144"/>
<dbReference type="PharmGKB" id="PA31204"/>
<dbReference type="VEuPathDB" id="HostDB:ENSG00000125144"/>
<dbReference type="eggNOG" id="KOG4738">
    <property type="taxonomic scope" value="Eukaryota"/>
</dbReference>
<dbReference type="GeneTree" id="ENSGT00950000182967"/>
<dbReference type="HOGENOM" id="CLU_171204_2_0_1"/>
<dbReference type="InParanoid" id="P13640"/>
<dbReference type="OMA" id="CKGASEN"/>
<dbReference type="PAN-GO" id="P13640">
    <property type="GO annotations" value="8 GO annotations based on evolutionary models"/>
</dbReference>
<dbReference type="PhylomeDB" id="P13640"/>
<dbReference type="TreeFam" id="TF336054"/>
<dbReference type="PathwayCommons" id="P13640"/>
<dbReference type="Reactome" id="R-HSA-5661231">
    <property type="pathway name" value="Metallothioneins bind metals"/>
</dbReference>
<dbReference type="SignaLink" id="P13640"/>
<dbReference type="SIGNOR" id="P13640"/>
<dbReference type="BioGRID-ORCS" id="4495">
    <property type="hits" value="21 hits in 745 CRISPR screens"/>
</dbReference>
<dbReference type="ChiTaRS" id="MT1G">
    <property type="organism name" value="human"/>
</dbReference>
<dbReference type="GeneWiki" id="Metallothionein_1G"/>
<dbReference type="GenomeRNAi" id="4495"/>
<dbReference type="Pharos" id="P13640">
    <property type="development level" value="Tbio"/>
</dbReference>
<dbReference type="PRO" id="PR:P13640"/>
<dbReference type="Proteomes" id="UP000005640">
    <property type="component" value="Chromosome 16"/>
</dbReference>
<dbReference type="RNAct" id="P13640">
    <property type="molecule type" value="protein"/>
</dbReference>
<dbReference type="Bgee" id="ENSG00000125144">
    <property type="expression patterns" value="Expressed in mucosa of transverse colon and 198 other cell types or tissues"/>
</dbReference>
<dbReference type="ExpressionAtlas" id="P13640">
    <property type="expression patterns" value="baseline and differential"/>
</dbReference>
<dbReference type="GO" id="GO:0005737">
    <property type="term" value="C:cytoplasm"/>
    <property type="evidence" value="ECO:0000314"/>
    <property type="project" value="UniProtKB"/>
</dbReference>
<dbReference type="GO" id="GO:0005634">
    <property type="term" value="C:nucleus"/>
    <property type="evidence" value="ECO:0000314"/>
    <property type="project" value="UniProtKB"/>
</dbReference>
<dbReference type="GO" id="GO:0046872">
    <property type="term" value="F:metal ion binding"/>
    <property type="evidence" value="ECO:0000318"/>
    <property type="project" value="GO_Central"/>
</dbReference>
<dbReference type="GO" id="GO:0008270">
    <property type="term" value="F:zinc ion binding"/>
    <property type="evidence" value="ECO:0000314"/>
    <property type="project" value="UniProtKB"/>
</dbReference>
<dbReference type="GO" id="GO:0071276">
    <property type="term" value="P:cellular response to cadmium ion"/>
    <property type="evidence" value="ECO:0000270"/>
    <property type="project" value="UniProtKB"/>
</dbReference>
<dbReference type="GO" id="GO:0071280">
    <property type="term" value="P:cellular response to copper ion"/>
    <property type="evidence" value="ECO:0000270"/>
    <property type="project" value="UniProtKB"/>
</dbReference>
<dbReference type="GO" id="GO:0035924">
    <property type="term" value="P:cellular response to vascular endothelial growth factor stimulus"/>
    <property type="evidence" value="ECO:0000270"/>
    <property type="project" value="UniProtKB"/>
</dbReference>
<dbReference type="GO" id="GO:0071294">
    <property type="term" value="P:cellular response to zinc ion"/>
    <property type="evidence" value="ECO:0000314"/>
    <property type="project" value="UniProtKB"/>
</dbReference>
<dbReference type="GO" id="GO:0010273">
    <property type="term" value="P:detoxification of copper ion"/>
    <property type="evidence" value="ECO:0000318"/>
    <property type="project" value="GO_Central"/>
</dbReference>
<dbReference type="GO" id="GO:0006882">
    <property type="term" value="P:intracellular zinc ion homeostasis"/>
    <property type="evidence" value="ECO:0000318"/>
    <property type="project" value="GO_Central"/>
</dbReference>
<dbReference type="GO" id="GO:0042117">
    <property type="term" value="P:monocyte activation"/>
    <property type="evidence" value="ECO:0000303"/>
    <property type="project" value="UniProtKB"/>
</dbReference>
<dbReference type="GO" id="GO:0030224">
    <property type="term" value="P:monocyte differentiation"/>
    <property type="evidence" value="ECO:0000303"/>
    <property type="project" value="UniProtKB"/>
</dbReference>
<dbReference type="GO" id="GO:0045926">
    <property type="term" value="P:negative regulation of growth"/>
    <property type="evidence" value="ECO:0000314"/>
    <property type="project" value="UniProtKB"/>
</dbReference>
<dbReference type="FunFam" id="4.10.10.10:FF:000001">
    <property type="entry name" value="Metallothionein"/>
    <property type="match status" value="1"/>
</dbReference>
<dbReference type="Gene3D" id="4.10.10.10">
    <property type="entry name" value="Metallothionein Isoform II"/>
    <property type="match status" value="1"/>
</dbReference>
<dbReference type="InterPro" id="IPR017854">
    <property type="entry name" value="Metalthion_dom_sf"/>
</dbReference>
<dbReference type="InterPro" id="IPR023587">
    <property type="entry name" value="Metalthion_dom_sf_vert"/>
</dbReference>
<dbReference type="InterPro" id="IPR000006">
    <property type="entry name" value="Metalthion_vert"/>
</dbReference>
<dbReference type="InterPro" id="IPR018064">
    <property type="entry name" value="Metalthion_vert_metal_BS"/>
</dbReference>
<dbReference type="PANTHER" id="PTHR23299">
    <property type="entry name" value="METALLOTHIONEIN"/>
    <property type="match status" value="1"/>
</dbReference>
<dbReference type="PANTHER" id="PTHR23299:SF22">
    <property type="entry name" value="METALLOTHIONEIN-1G"/>
    <property type="match status" value="1"/>
</dbReference>
<dbReference type="Pfam" id="PF00131">
    <property type="entry name" value="Metallothio"/>
    <property type="match status" value="1"/>
</dbReference>
<dbReference type="PRINTS" id="PR00860">
    <property type="entry name" value="MTVERTEBRATE"/>
</dbReference>
<dbReference type="SUPFAM" id="SSF57868">
    <property type="entry name" value="Metallothionein"/>
    <property type="match status" value="1"/>
</dbReference>
<dbReference type="PROSITE" id="PS00203">
    <property type="entry name" value="METALLOTHIONEIN_VRT"/>
    <property type="match status" value="1"/>
</dbReference>
<gene>
    <name type="primary">MT1G</name>
    <name type="synonym">MT1K</name>
    <name type="synonym">MT1M</name>
</gene>
<keyword id="KW-0007">Acetylation</keyword>
<keyword id="KW-0025">Alternative splicing</keyword>
<keyword id="KW-0104">Cadmium</keyword>
<keyword id="KW-0186">Copper</keyword>
<keyword id="KW-0903">Direct protein sequencing</keyword>
<keyword id="KW-0479">Metal-binding</keyword>
<keyword id="KW-0480">Metal-thiolate cluster</keyword>
<keyword id="KW-0597">Phosphoprotein</keyword>
<keyword id="KW-1267">Proteomics identification</keyword>
<keyword id="KW-1185">Reference proteome</keyword>
<keyword id="KW-0862">Zinc</keyword>
<proteinExistence type="evidence at protein level"/>
<evidence type="ECO:0000250" key="1">
    <source>
        <dbReference type="UniProtKB" id="P02795"/>
    </source>
</evidence>
<evidence type="ECO:0000269" key="2">
    <source>
    </source>
</evidence>
<evidence type="ECO:0000303" key="3">
    <source>
    </source>
</evidence>
<evidence type="ECO:0000305" key="4"/>
<sequence length="62" mass="6141">MDPNCSCAAAGVSCTCASSCKCKECKCTSCKKSCCSCCPVGCAKCAQGCICKGASEKCSCCA</sequence>
<comment type="function">
    <text>Metallothioneins have a high content of cysteine residues that bind various heavy metals; these proteins are transcriptionally regulated by both heavy metals and glucocorticoids.</text>
</comment>
<comment type="subunit">
    <text>Monomer.</text>
</comment>
<comment type="interaction">
    <interactant intactId="EBI-1182473">
        <id>P13640</id>
    </interactant>
    <interactant intactId="EBI-1182445">
        <id>P58062</id>
        <label>SPINK7</label>
    </interactant>
    <organismsDiffer>false</organismsDiffer>
    <experiments>3</experiments>
</comment>
<comment type="alternative products">
    <event type="alternative splicing"/>
    <isoform>
        <id>P13640-1</id>
        <name>1</name>
        <sequence type="displayed"/>
    </isoform>
    <isoform>
        <id>P13640-2</id>
        <name>2</name>
        <sequence type="described" ref="VSP_017230"/>
    </isoform>
</comment>
<comment type="domain">
    <text>Class I metallothioneins contain 2 metal-binding domains: four divalent ions are chelated within cluster A of the alpha domain and are coordinated via cysteinyl thiolate bridges to 11 cysteine ligands. Cluster B, the corresponding region within the beta domain, can ligate three divalent ions to 9 cysteines.</text>
</comment>
<comment type="similarity">
    <text evidence="4">Belongs to the metallothionein superfamily. Type 1 family.</text>
</comment>
<protein>
    <recommendedName>
        <fullName>Metallothionein-1G</fullName>
        <shortName>MT-1G</shortName>
    </recommendedName>
    <alternativeName>
        <fullName>Metallothionein-1K</fullName>
        <shortName>MT-1K</shortName>
    </alternativeName>
    <alternativeName>
        <fullName>Metallothionein-IG</fullName>
        <shortName>MT-IG</shortName>
    </alternativeName>
</protein>
<name>MT1G_HUMAN</name>
<organism>
    <name type="scientific">Homo sapiens</name>
    <name type="common">Human</name>
    <dbReference type="NCBI Taxonomy" id="9606"/>
    <lineage>
        <taxon>Eukaryota</taxon>
        <taxon>Metazoa</taxon>
        <taxon>Chordata</taxon>
        <taxon>Craniata</taxon>
        <taxon>Vertebrata</taxon>
        <taxon>Euteleostomi</taxon>
        <taxon>Mammalia</taxon>
        <taxon>Eutheria</taxon>
        <taxon>Euarchontoglires</taxon>
        <taxon>Primates</taxon>
        <taxon>Haplorrhini</taxon>
        <taxon>Catarrhini</taxon>
        <taxon>Hominidae</taxon>
        <taxon>Homo</taxon>
    </lineage>
</organism>
<accession>P13640</accession>
<accession>P80296</accession>
<feature type="chain" id="PRO_0000197238" description="Metallothionein-1G">
    <location>
        <begin position="1"/>
        <end position="62"/>
    </location>
</feature>
<feature type="region of interest" description="Beta">
    <location>
        <begin position="1"/>
        <end position="29"/>
    </location>
</feature>
<feature type="region of interest" description="Alpha">
    <location>
        <begin position="31"/>
        <end position="62"/>
    </location>
</feature>
<feature type="binding site" evidence="1">
    <location>
        <position position="5"/>
    </location>
    <ligand>
        <name>a divalent metal cation</name>
        <dbReference type="ChEBI" id="CHEBI:60240"/>
        <label>1</label>
        <note>in cluster B</note>
    </ligand>
</feature>
<feature type="binding site" evidence="1">
    <location>
        <position position="7"/>
    </location>
    <ligand>
        <name>a divalent metal cation</name>
        <dbReference type="ChEBI" id="CHEBI:60240"/>
        <label>1</label>
        <note>in cluster B</note>
    </ligand>
</feature>
<feature type="binding site" evidence="1">
    <location>
        <position position="7"/>
    </location>
    <ligand>
        <name>a divalent metal cation</name>
        <dbReference type="ChEBI" id="CHEBI:60240"/>
        <label>2</label>
        <note>in cluster B</note>
    </ligand>
</feature>
<feature type="binding site" evidence="1">
    <location>
        <position position="14"/>
    </location>
    <ligand>
        <name>a divalent metal cation</name>
        <dbReference type="ChEBI" id="CHEBI:60240"/>
        <label>2</label>
        <note>in cluster B</note>
    </ligand>
</feature>
<feature type="binding site" evidence="1">
    <location>
        <position position="16"/>
    </location>
    <ligand>
        <name>a divalent metal cation</name>
        <dbReference type="ChEBI" id="CHEBI:60240"/>
        <label>2</label>
        <note>in cluster B</note>
    </ligand>
</feature>
<feature type="binding site" evidence="1">
    <location>
        <position position="16"/>
    </location>
    <ligand>
        <name>a divalent metal cation</name>
        <dbReference type="ChEBI" id="CHEBI:60240"/>
        <label>3</label>
        <note>in cluster B</note>
    </ligand>
</feature>
<feature type="binding site" evidence="1">
    <location>
        <position position="20"/>
    </location>
    <ligand>
        <name>a divalent metal cation</name>
        <dbReference type="ChEBI" id="CHEBI:60240"/>
        <label>3</label>
        <note>in cluster B</note>
    </ligand>
</feature>
<feature type="binding site" evidence="1">
    <location>
        <position position="22"/>
    </location>
    <ligand>
        <name>a divalent metal cation</name>
        <dbReference type="ChEBI" id="CHEBI:60240"/>
        <label>1</label>
        <note>in cluster B</note>
    </ligand>
</feature>
<feature type="binding site" evidence="1">
    <location>
        <position position="25"/>
    </location>
    <ligand>
        <name>a divalent metal cation</name>
        <dbReference type="ChEBI" id="CHEBI:60240"/>
        <label>1</label>
        <note>in cluster B</note>
    </ligand>
</feature>
<feature type="binding site" evidence="1">
    <location>
        <position position="25"/>
    </location>
    <ligand>
        <name>a divalent metal cation</name>
        <dbReference type="ChEBI" id="CHEBI:60240"/>
        <label>3</label>
        <note>in cluster B</note>
    </ligand>
</feature>
<feature type="binding site" evidence="1">
    <location>
        <position position="27"/>
    </location>
    <ligand>
        <name>a divalent metal cation</name>
        <dbReference type="ChEBI" id="CHEBI:60240"/>
        <label>2</label>
        <note>in cluster B</note>
    </ligand>
</feature>
<feature type="binding site" evidence="1">
    <location>
        <position position="30"/>
    </location>
    <ligand>
        <name>a divalent metal cation</name>
        <dbReference type="ChEBI" id="CHEBI:60240"/>
        <label>3</label>
        <note>in cluster B</note>
    </ligand>
</feature>
<feature type="binding site" evidence="1">
    <location>
        <position position="34"/>
    </location>
    <ligand>
        <name>a divalent metal cation</name>
        <dbReference type="ChEBI" id="CHEBI:60240"/>
        <label>4</label>
        <note>in cluster A</note>
    </ligand>
</feature>
<feature type="binding site" evidence="1">
    <location>
        <position position="35"/>
    </location>
    <ligand>
        <name>a divalent metal cation</name>
        <dbReference type="ChEBI" id="CHEBI:60240"/>
        <label>4</label>
        <note>in cluster A</note>
    </ligand>
</feature>
<feature type="binding site" evidence="1">
    <location>
        <position position="35"/>
    </location>
    <ligand>
        <name>a divalent metal cation</name>
        <dbReference type="ChEBI" id="CHEBI:60240"/>
        <label>5</label>
        <note>in cluster A</note>
    </ligand>
</feature>
<feature type="binding site" evidence="1">
    <location>
        <position position="37"/>
    </location>
    <ligand>
        <name>a divalent metal cation</name>
        <dbReference type="ChEBI" id="CHEBI:60240"/>
        <label>5</label>
        <note>in cluster A</note>
    </ligand>
</feature>
<feature type="binding site" evidence="1">
    <location>
        <position position="38"/>
    </location>
    <ligand>
        <name>a divalent metal cation</name>
        <dbReference type="ChEBI" id="CHEBI:60240"/>
        <label>5</label>
        <note>in cluster A</note>
    </ligand>
</feature>
<feature type="binding site" evidence="1">
    <location>
        <position position="38"/>
    </location>
    <ligand>
        <name>a divalent metal cation</name>
        <dbReference type="ChEBI" id="CHEBI:60240"/>
        <label>6</label>
        <note>in cluster A</note>
    </ligand>
</feature>
<feature type="binding site" evidence="1">
    <location>
        <position position="42"/>
    </location>
    <ligand>
        <name>a divalent metal cation</name>
        <dbReference type="ChEBI" id="CHEBI:60240"/>
        <label>6</label>
        <note>in cluster A</note>
    </ligand>
</feature>
<feature type="binding site" evidence="1">
    <location>
        <position position="45"/>
    </location>
    <ligand>
        <name>a divalent metal cation</name>
        <dbReference type="ChEBI" id="CHEBI:60240"/>
        <label>4</label>
        <note>in cluster A</note>
    </ligand>
</feature>
<feature type="binding site" evidence="1">
    <location>
        <position position="45"/>
    </location>
    <ligand>
        <name>a divalent metal cation</name>
        <dbReference type="ChEBI" id="CHEBI:60240"/>
        <label>6</label>
        <note>in cluster A</note>
    </ligand>
</feature>
<feature type="binding site" evidence="1">
    <location>
        <position position="49"/>
    </location>
    <ligand>
        <name>a divalent metal cation</name>
        <dbReference type="ChEBI" id="CHEBI:60240"/>
        <label>4</label>
        <note>in cluster A</note>
    </ligand>
</feature>
<feature type="binding site" evidence="1">
    <location>
        <position position="51"/>
    </location>
    <ligand>
        <name>a divalent metal cation</name>
        <dbReference type="ChEBI" id="CHEBI:60240"/>
        <label>5</label>
        <note>in cluster A</note>
    </ligand>
</feature>
<feature type="binding site" evidence="1">
    <location>
        <position position="51"/>
    </location>
    <ligand>
        <name>a divalent metal cation</name>
        <dbReference type="ChEBI" id="CHEBI:60240"/>
        <label>7</label>
        <note>in cluster A</note>
    </ligand>
</feature>
<feature type="binding site" evidence="1">
    <location>
        <position position="58"/>
    </location>
    <ligand>
        <name>a divalent metal cation</name>
        <dbReference type="ChEBI" id="CHEBI:60240"/>
        <label>7</label>
        <note>in cluster A</note>
    </ligand>
</feature>
<feature type="binding site" evidence="1">
    <location>
        <position position="60"/>
    </location>
    <ligand>
        <name>a divalent metal cation</name>
        <dbReference type="ChEBI" id="CHEBI:60240"/>
        <label>7</label>
        <note>in cluster A</note>
    </ligand>
</feature>
<feature type="binding site" evidence="1">
    <location>
        <position position="61"/>
    </location>
    <ligand>
        <name>a divalent metal cation</name>
        <dbReference type="ChEBI" id="CHEBI:60240"/>
        <label>6</label>
        <note>in cluster A</note>
    </ligand>
</feature>
<feature type="binding site" evidence="1">
    <location>
        <position position="61"/>
    </location>
    <ligand>
        <name>a divalent metal cation</name>
        <dbReference type="ChEBI" id="CHEBI:60240"/>
        <label>7</label>
        <note>in cluster A</note>
    </ligand>
</feature>
<feature type="modified residue" description="N-acetylmethionine" evidence="2">
    <location>
        <position position="1"/>
    </location>
</feature>
<feature type="modified residue" description="Phosphoserine" evidence="1">
    <location>
        <position position="59"/>
    </location>
</feature>
<feature type="splice variant" id="VSP_017230" description="In isoform 2." evidence="3">
    <location>
        <position position="10"/>
    </location>
</feature>